<feature type="chain" id="PRO_0000288758" description="Cytochrome c homolog">
    <location>
        <begin position="1"/>
        <end position="175"/>
    </location>
</feature>
<feature type="topological domain" description="Cytoplasmic" evidence="2">
    <location>
        <begin position="1"/>
        <end position="8"/>
    </location>
</feature>
<feature type="transmembrane region" description="Helical; Signal-anchor" evidence="2">
    <location>
        <begin position="9"/>
        <end position="29"/>
    </location>
</feature>
<feature type="topological domain" description="Periplasmic" evidence="2">
    <location>
        <begin position="30"/>
        <end position="175"/>
    </location>
</feature>
<feature type="binding site" description="covalent" evidence="3">
    <location>
        <position position="84"/>
    </location>
    <ligand>
        <name>heme c</name>
        <dbReference type="ChEBI" id="CHEBI:61717"/>
    </ligand>
</feature>
<feature type="binding site" description="covalent" evidence="3">
    <location>
        <position position="87"/>
    </location>
    <ligand>
        <name>heme c</name>
        <dbReference type="ChEBI" id="CHEBI:61717"/>
    </ligand>
</feature>
<feature type="binding site" description="axial binding residue" evidence="3">
    <location>
        <position position="88"/>
    </location>
    <ligand>
        <name>heme c</name>
        <dbReference type="ChEBI" id="CHEBI:61717"/>
    </ligand>
    <ligandPart>
        <name>Fe</name>
        <dbReference type="ChEBI" id="CHEBI:18248"/>
    </ligandPart>
</feature>
<feature type="binding site" description="axial binding residue" evidence="3">
    <location>
        <position position="150"/>
    </location>
    <ligand>
        <name>heme c</name>
        <dbReference type="ChEBI" id="CHEBI:61717"/>
    </ligand>
    <ligandPart>
        <name>Fe</name>
        <dbReference type="ChEBI" id="CHEBI:18248"/>
    </ligandPart>
</feature>
<proteinExistence type="inferred from homology"/>
<reference key="1">
    <citation type="journal article" date="1998" name="Nature">
        <title>The genome sequence of Rickettsia prowazekii and the origin of mitochondria.</title>
        <authorList>
            <person name="Andersson S.G.E."/>
            <person name="Zomorodipour A."/>
            <person name="Andersson J.O."/>
            <person name="Sicheritz-Ponten T."/>
            <person name="Alsmark U.C.M."/>
            <person name="Podowski R.M."/>
            <person name="Naeslund A.K."/>
            <person name="Eriksson A.-S."/>
            <person name="Winkler H.H."/>
            <person name="Kurland C.G."/>
        </authorList>
    </citation>
    <scope>NUCLEOTIDE SEQUENCE [LARGE SCALE GENOMIC DNA]</scope>
    <source>
        <strain>Madrid E</strain>
    </source>
</reference>
<protein>
    <recommendedName>
        <fullName>Cytochrome c homolog</fullName>
    </recommendedName>
</protein>
<accession>Q9ZDS2</accession>
<organism>
    <name type="scientific">Rickettsia prowazekii (strain Madrid E)</name>
    <dbReference type="NCBI Taxonomy" id="272947"/>
    <lineage>
        <taxon>Bacteria</taxon>
        <taxon>Pseudomonadati</taxon>
        <taxon>Pseudomonadota</taxon>
        <taxon>Alphaproteobacteria</taxon>
        <taxon>Rickettsiales</taxon>
        <taxon>Rickettsiaceae</taxon>
        <taxon>Rickettsieae</taxon>
        <taxon>Rickettsia</taxon>
        <taxon>typhus group</taxon>
    </lineage>
</organism>
<keyword id="KW-1003">Cell membrane</keyword>
<keyword id="KW-0249">Electron transport</keyword>
<keyword id="KW-0349">Heme</keyword>
<keyword id="KW-0408">Iron</keyword>
<keyword id="KW-0472">Membrane</keyword>
<keyword id="KW-0479">Metal-binding</keyword>
<keyword id="KW-1185">Reference proteome</keyword>
<keyword id="KW-0735">Signal-anchor</keyword>
<keyword id="KW-0812">Transmembrane</keyword>
<keyword id="KW-1133">Transmembrane helix</keyword>
<keyword id="KW-0813">Transport</keyword>
<gene>
    <name type="primary">cycM</name>
    <name type="ordered locus">RP253</name>
</gene>
<evidence type="ECO:0000250" key="1"/>
<evidence type="ECO:0000255" key="2"/>
<evidence type="ECO:0000255" key="3">
    <source>
        <dbReference type="PROSITE-ProRule" id="PRU00433"/>
    </source>
</evidence>
<evidence type="ECO:0000305" key="4"/>
<sequence>MTGKELNKIVAAILFASLIAMIVGFIANILYKPNLHVLHRGYSIAIQKSSSNESATVIAQESVNIQELMKTANANHGREIAKKCLMCHSLDKDGPNKLGPHLWNIVGRPKASITDYKYSFAISKLGGVWDDENLFAFLHKPSSYAPGTKMSFAGISKPQDIADVILFLKNYVHDQ</sequence>
<name>CYCM_RICPR</name>
<dbReference type="EMBL" id="AJ235271">
    <property type="protein sequence ID" value="CAA14715.1"/>
    <property type="molecule type" value="Genomic_DNA"/>
</dbReference>
<dbReference type="PIR" id="A71680">
    <property type="entry name" value="A71680"/>
</dbReference>
<dbReference type="RefSeq" id="NP_220638.1">
    <property type="nucleotide sequence ID" value="NC_000963.1"/>
</dbReference>
<dbReference type="RefSeq" id="WP_004598522.1">
    <property type="nucleotide sequence ID" value="NC_000963.1"/>
</dbReference>
<dbReference type="SMR" id="Q9ZDS2"/>
<dbReference type="STRING" id="272947.gene:17555334"/>
<dbReference type="EnsemblBacteria" id="CAA14715">
    <property type="protein sequence ID" value="CAA14715"/>
    <property type="gene ID" value="CAA14715"/>
</dbReference>
<dbReference type="KEGG" id="rpr:RP253"/>
<dbReference type="PATRIC" id="fig|272947.5.peg.260"/>
<dbReference type="eggNOG" id="COG3474">
    <property type="taxonomic scope" value="Bacteria"/>
</dbReference>
<dbReference type="HOGENOM" id="CLU_060944_4_0_5"/>
<dbReference type="OrthoDB" id="9805828at2"/>
<dbReference type="Proteomes" id="UP000002480">
    <property type="component" value="Chromosome"/>
</dbReference>
<dbReference type="GO" id="GO:0005886">
    <property type="term" value="C:plasma membrane"/>
    <property type="evidence" value="ECO:0007669"/>
    <property type="project" value="UniProtKB-SubCell"/>
</dbReference>
<dbReference type="GO" id="GO:0009055">
    <property type="term" value="F:electron transfer activity"/>
    <property type="evidence" value="ECO:0007669"/>
    <property type="project" value="InterPro"/>
</dbReference>
<dbReference type="GO" id="GO:0020037">
    <property type="term" value="F:heme binding"/>
    <property type="evidence" value="ECO:0007669"/>
    <property type="project" value="InterPro"/>
</dbReference>
<dbReference type="GO" id="GO:0046872">
    <property type="term" value="F:metal ion binding"/>
    <property type="evidence" value="ECO:0007669"/>
    <property type="project" value="UniProtKB-KW"/>
</dbReference>
<dbReference type="FunFam" id="1.10.760.10:FF:000026">
    <property type="entry name" value="Cytochrome C, membrane-bound"/>
    <property type="match status" value="1"/>
</dbReference>
<dbReference type="Gene3D" id="1.10.760.10">
    <property type="entry name" value="Cytochrome c-like domain"/>
    <property type="match status" value="1"/>
</dbReference>
<dbReference type="InterPro" id="IPR009056">
    <property type="entry name" value="Cyt_c-like_dom"/>
</dbReference>
<dbReference type="InterPro" id="IPR036909">
    <property type="entry name" value="Cyt_c-like_dom_sf"/>
</dbReference>
<dbReference type="InterPro" id="IPR002327">
    <property type="entry name" value="Cyt_c_1A/1B"/>
</dbReference>
<dbReference type="PANTHER" id="PTHR11961">
    <property type="entry name" value="CYTOCHROME C"/>
    <property type="match status" value="1"/>
</dbReference>
<dbReference type="Pfam" id="PF00034">
    <property type="entry name" value="Cytochrom_C"/>
    <property type="match status" value="1"/>
</dbReference>
<dbReference type="PRINTS" id="PR00604">
    <property type="entry name" value="CYTCHRMECIAB"/>
</dbReference>
<dbReference type="SUPFAM" id="SSF46626">
    <property type="entry name" value="Cytochrome c"/>
    <property type="match status" value="1"/>
</dbReference>
<dbReference type="PROSITE" id="PS51007">
    <property type="entry name" value="CYTC"/>
    <property type="match status" value="1"/>
</dbReference>
<comment type="function">
    <text evidence="1">May be involved in electron transfer from bc1 complex to aa3.</text>
</comment>
<comment type="subcellular location">
    <subcellularLocation>
        <location evidence="1">Cell membrane</location>
        <topology evidence="1">Single-pass type II membrane protein</topology>
    </subcellularLocation>
</comment>
<comment type="PTM">
    <text evidence="1">Binds 1 heme c group covalently per subunit.</text>
</comment>
<comment type="similarity">
    <text evidence="4">Belongs to the cytochrome c family.</text>
</comment>